<gene>
    <name evidence="1" type="primary">speE</name>
    <name type="synonym">ywhF</name>
    <name type="ordered locus">BSU37500</name>
</gene>
<keyword id="KW-0002">3D-structure</keyword>
<keyword id="KW-0963">Cytoplasm</keyword>
<keyword id="KW-0620">Polyamine biosynthesis</keyword>
<keyword id="KW-1185">Reference proteome</keyword>
<keyword id="KW-0745">Spermidine biosynthesis</keyword>
<keyword id="KW-0808">Transferase</keyword>
<accession>P70998</accession>
<comment type="function">
    <text evidence="3">Involved in the cell growth and proliferation. Catalyzes the irreversible transfer of a propylamine group from the amino donor S-adenosylmethioninamine (decarboxy-AdoMet) to putrescine (1,4-diaminobutane) to yield spermidine (Probable).</text>
</comment>
<comment type="catalytic activity">
    <reaction evidence="1">
        <text>S-adenosyl 3-(methylsulfanyl)propylamine + putrescine = S-methyl-5'-thioadenosine + spermidine + H(+)</text>
        <dbReference type="Rhea" id="RHEA:12721"/>
        <dbReference type="ChEBI" id="CHEBI:15378"/>
        <dbReference type="ChEBI" id="CHEBI:17509"/>
        <dbReference type="ChEBI" id="CHEBI:57443"/>
        <dbReference type="ChEBI" id="CHEBI:57834"/>
        <dbReference type="ChEBI" id="CHEBI:326268"/>
        <dbReference type="EC" id="2.5.1.16"/>
    </reaction>
</comment>
<comment type="pathway">
    <text evidence="1">Amine and polyamine biosynthesis; spermidine biosynthesis; spermidine from putrescine: step 1/1.</text>
</comment>
<comment type="subunit">
    <text evidence="1 2">Homodimer or homotetramer.</text>
</comment>
<comment type="subcellular location">
    <subcellularLocation>
        <location evidence="1">Cytoplasm</location>
    </subcellularLocation>
</comment>
<comment type="miscellaneous">
    <text evidence="3">B.subtilis has only one biosynthetic pathway from agmatine to spermidine to produce polyamines.</text>
</comment>
<comment type="similarity">
    <text evidence="1">Belongs to the spermidine/spermine synthase family.</text>
</comment>
<evidence type="ECO:0000255" key="1">
    <source>
        <dbReference type="HAMAP-Rule" id="MF_00198"/>
    </source>
</evidence>
<evidence type="ECO:0000269" key="2">
    <source ref="4"/>
</evidence>
<evidence type="ECO:0000305" key="3">
    <source>
    </source>
</evidence>
<evidence type="ECO:0007829" key="4">
    <source>
        <dbReference type="PDB" id="1IY9"/>
    </source>
</evidence>
<sequence>MSELWYTEKQTKNFGITMKVNKTLHTEQTEFQHLEMVETEEFGNMLFLDGMVMTSEKDEFVYHEMVAHVPLFTHPNPEHVLVVGGGDGGVIREILKHPSVKKATLVDIDGKVIEYSKKFLPSIAGKLDDPRVDVQVDDGFMHIAKSENQYDVIMVDSTEPVGPAVNLFTKGFYAGIAKALKEDGIFVAQTDNPWFTPELITNVQRDVKEIFPITKLYTANIPTYPSGLWTFTIGSKKYDPLAVEDSRFFDIETKYYTKDIHKAAFVLPKFVSDLIK</sequence>
<reference key="1">
    <citation type="journal article" date="1997" name="Microbiology">
        <title>The Bacillus subtilis genome from gerBC (311 degrees) to licR (334 degrees).</title>
        <authorList>
            <person name="Presecan E."/>
            <person name="Moszer I."/>
            <person name="Boursier L."/>
            <person name="Cruz Ramos H."/>
            <person name="De La Fuente V."/>
            <person name="Hullo M.-F."/>
            <person name="Lelong C."/>
            <person name="Schleich S."/>
            <person name="Sekowska A."/>
            <person name="Song B.H."/>
            <person name="Villani G."/>
            <person name="Kunst F."/>
            <person name="Danchin A."/>
            <person name="Glaser P."/>
        </authorList>
    </citation>
    <scope>NUCLEOTIDE SEQUENCE [GENOMIC DNA]</scope>
    <source>
        <strain>168</strain>
    </source>
</reference>
<reference key="2">
    <citation type="journal article" date="1997" name="Nature">
        <title>The complete genome sequence of the Gram-positive bacterium Bacillus subtilis.</title>
        <authorList>
            <person name="Kunst F."/>
            <person name="Ogasawara N."/>
            <person name="Moszer I."/>
            <person name="Albertini A.M."/>
            <person name="Alloni G."/>
            <person name="Azevedo V."/>
            <person name="Bertero M.G."/>
            <person name="Bessieres P."/>
            <person name="Bolotin A."/>
            <person name="Borchert S."/>
            <person name="Borriss R."/>
            <person name="Boursier L."/>
            <person name="Brans A."/>
            <person name="Braun M."/>
            <person name="Brignell S.C."/>
            <person name="Bron S."/>
            <person name="Brouillet S."/>
            <person name="Bruschi C.V."/>
            <person name="Caldwell B."/>
            <person name="Capuano V."/>
            <person name="Carter N.M."/>
            <person name="Choi S.-K."/>
            <person name="Codani J.-J."/>
            <person name="Connerton I.F."/>
            <person name="Cummings N.J."/>
            <person name="Daniel R.A."/>
            <person name="Denizot F."/>
            <person name="Devine K.M."/>
            <person name="Duesterhoeft A."/>
            <person name="Ehrlich S.D."/>
            <person name="Emmerson P.T."/>
            <person name="Entian K.-D."/>
            <person name="Errington J."/>
            <person name="Fabret C."/>
            <person name="Ferrari E."/>
            <person name="Foulger D."/>
            <person name="Fritz C."/>
            <person name="Fujita M."/>
            <person name="Fujita Y."/>
            <person name="Fuma S."/>
            <person name="Galizzi A."/>
            <person name="Galleron N."/>
            <person name="Ghim S.-Y."/>
            <person name="Glaser P."/>
            <person name="Goffeau A."/>
            <person name="Golightly E.J."/>
            <person name="Grandi G."/>
            <person name="Guiseppi G."/>
            <person name="Guy B.J."/>
            <person name="Haga K."/>
            <person name="Haiech J."/>
            <person name="Harwood C.R."/>
            <person name="Henaut A."/>
            <person name="Hilbert H."/>
            <person name="Holsappel S."/>
            <person name="Hosono S."/>
            <person name="Hullo M.-F."/>
            <person name="Itaya M."/>
            <person name="Jones L.-M."/>
            <person name="Joris B."/>
            <person name="Karamata D."/>
            <person name="Kasahara Y."/>
            <person name="Klaerr-Blanchard M."/>
            <person name="Klein C."/>
            <person name="Kobayashi Y."/>
            <person name="Koetter P."/>
            <person name="Koningstein G."/>
            <person name="Krogh S."/>
            <person name="Kumano M."/>
            <person name="Kurita K."/>
            <person name="Lapidus A."/>
            <person name="Lardinois S."/>
            <person name="Lauber J."/>
            <person name="Lazarevic V."/>
            <person name="Lee S.-M."/>
            <person name="Levine A."/>
            <person name="Liu H."/>
            <person name="Masuda S."/>
            <person name="Mauel C."/>
            <person name="Medigue C."/>
            <person name="Medina N."/>
            <person name="Mellado R.P."/>
            <person name="Mizuno M."/>
            <person name="Moestl D."/>
            <person name="Nakai S."/>
            <person name="Noback M."/>
            <person name="Noone D."/>
            <person name="O'Reilly M."/>
            <person name="Ogawa K."/>
            <person name="Ogiwara A."/>
            <person name="Oudega B."/>
            <person name="Park S.-H."/>
            <person name="Parro V."/>
            <person name="Pohl T.M."/>
            <person name="Portetelle D."/>
            <person name="Porwollik S."/>
            <person name="Prescott A.M."/>
            <person name="Presecan E."/>
            <person name="Pujic P."/>
            <person name="Purnelle B."/>
            <person name="Rapoport G."/>
            <person name="Rey M."/>
            <person name="Reynolds S."/>
            <person name="Rieger M."/>
            <person name="Rivolta C."/>
            <person name="Rocha E."/>
            <person name="Roche B."/>
            <person name="Rose M."/>
            <person name="Sadaie Y."/>
            <person name="Sato T."/>
            <person name="Scanlan E."/>
            <person name="Schleich S."/>
            <person name="Schroeter R."/>
            <person name="Scoffone F."/>
            <person name="Sekiguchi J."/>
            <person name="Sekowska A."/>
            <person name="Seror S.J."/>
            <person name="Serror P."/>
            <person name="Shin B.-S."/>
            <person name="Soldo B."/>
            <person name="Sorokin A."/>
            <person name="Tacconi E."/>
            <person name="Takagi T."/>
            <person name="Takahashi H."/>
            <person name="Takemaru K."/>
            <person name="Takeuchi M."/>
            <person name="Tamakoshi A."/>
            <person name="Tanaka T."/>
            <person name="Terpstra P."/>
            <person name="Tognoni A."/>
            <person name="Tosato V."/>
            <person name="Uchiyama S."/>
            <person name="Vandenbol M."/>
            <person name="Vannier F."/>
            <person name="Vassarotti A."/>
            <person name="Viari A."/>
            <person name="Wambutt R."/>
            <person name="Wedler E."/>
            <person name="Wedler H."/>
            <person name="Weitzenegger T."/>
            <person name="Winters P."/>
            <person name="Wipat A."/>
            <person name="Yamamoto H."/>
            <person name="Yamane K."/>
            <person name="Yasumoto K."/>
            <person name="Yata K."/>
            <person name="Yoshida K."/>
            <person name="Yoshikawa H.-F."/>
            <person name="Zumstein E."/>
            <person name="Yoshikawa H."/>
            <person name="Danchin A."/>
        </authorList>
    </citation>
    <scope>NUCLEOTIDE SEQUENCE [LARGE SCALE GENOMIC DNA]</scope>
    <source>
        <strain>168</strain>
    </source>
</reference>
<reference key="3">
    <citation type="journal article" date="1998" name="Mol. Microbiol.">
        <title>Characterization of polyamine synthesis pathway in Bacillus subtilis 168.</title>
        <authorList>
            <person name="Sekowska A."/>
            <person name="Bertin P."/>
            <person name="Danchin A."/>
        </authorList>
    </citation>
    <scope>FUNCTION IN THE POLYAMINE BIOSYNTHESIS</scope>
    <source>
        <strain>168</strain>
    </source>
</reference>
<reference key="4">
    <citation type="submission" date="2005-01" db="PDB data bank">
        <title>Crystal structure of spermidine synthase.</title>
        <authorList>
            <consortium name="Northeast structural genomics consortium (NESG)"/>
        </authorList>
    </citation>
    <scope>X-RAY CRYSTALLOGRAPHY (2.30 ANGSTROMS) OF 2-276</scope>
    <scope>SUBUNIT</scope>
</reference>
<organism>
    <name type="scientific">Bacillus subtilis (strain 168)</name>
    <dbReference type="NCBI Taxonomy" id="224308"/>
    <lineage>
        <taxon>Bacteria</taxon>
        <taxon>Bacillati</taxon>
        <taxon>Bacillota</taxon>
        <taxon>Bacilli</taxon>
        <taxon>Bacillales</taxon>
        <taxon>Bacillaceae</taxon>
        <taxon>Bacillus</taxon>
    </lineage>
</organism>
<dbReference type="EC" id="2.5.1.16" evidence="1"/>
<dbReference type="EMBL" id="Z80360">
    <property type="protein sequence ID" value="CAB02516.1"/>
    <property type="molecule type" value="Genomic_DNA"/>
</dbReference>
<dbReference type="EMBL" id="AL009126">
    <property type="protein sequence ID" value="CAB15777.1"/>
    <property type="molecule type" value="Genomic_DNA"/>
</dbReference>
<dbReference type="PIR" id="G70057">
    <property type="entry name" value="G70057"/>
</dbReference>
<dbReference type="RefSeq" id="NP_391630.1">
    <property type="nucleotide sequence ID" value="NC_000964.3"/>
</dbReference>
<dbReference type="RefSeq" id="WP_003227543.1">
    <property type="nucleotide sequence ID" value="NZ_OZ025638.1"/>
</dbReference>
<dbReference type="PDB" id="1IY9">
    <property type="method" value="X-ray"/>
    <property type="resolution" value="2.30 A"/>
    <property type="chains" value="A/B/C/D=2-276"/>
</dbReference>
<dbReference type="PDBsum" id="1IY9"/>
<dbReference type="SMR" id="P70998"/>
<dbReference type="FunCoup" id="P70998">
    <property type="interactions" value="608"/>
</dbReference>
<dbReference type="STRING" id="224308.BSU37500"/>
<dbReference type="PaxDb" id="224308-BSU37500"/>
<dbReference type="EnsemblBacteria" id="CAB15777">
    <property type="protein sequence ID" value="CAB15777"/>
    <property type="gene ID" value="BSU_37500"/>
</dbReference>
<dbReference type="GeneID" id="86871629"/>
<dbReference type="GeneID" id="937075"/>
<dbReference type="KEGG" id="bsu:BSU37500"/>
<dbReference type="PATRIC" id="fig|224308.179.peg.4061"/>
<dbReference type="eggNOG" id="COG0421">
    <property type="taxonomic scope" value="Bacteria"/>
</dbReference>
<dbReference type="InParanoid" id="P70998"/>
<dbReference type="OrthoDB" id="9793120at2"/>
<dbReference type="PhylomeDB" id="P70998"/>
<dbReference type="BioCyc" id="BSUB:BSU37500-MONOMER"/>
<dbReference type="UniPathway" id="UPA00248">
    <property type="reaction ID" value="UER00314"/>
</dbReference>
<dbReference type="EvolutionaryTrace" id="P70998"/>
<dbReference type="Proteomes" id="UP000001570">
    <property type="component" value="Chromosome"/>
</dbReference>
<dbReference type="GO" id="GO:0005829">
    <property type="term" value="C:cytosol"/>
    <property type="evidence" value="ECO:0000318"/>
    <property type="project" value="GO_Central"/>
</dbReference>
<dbReference type="GO" id="GO:0004766">
    <property type="term" value="F:spermidine synthase activity"/>
    <property type="evidence" value="ECO:0000318"/>
    <property type="project" value="GO_Central"/>
</dbReference>
<dbReference type="GO" id="GO:0008295">
    <property type="term" value="P:spermidine biosynthetic process"/>
    <property type="evidence" value="ECO:0000318"/>
    <property type="project" value="GO_Central"/>
</dbReference>
<dbReference type="CDD" id="cd02440">
    <property type="entry name" value="AdoMet_MTases"/>
    <property type="match status" value="1"/>
</dbReference>
<dbReference type="FunFam" id="3.40.50.150:FF:000056">
    <property type="entry name" value="Polyamine aminopropyltransferase"/>
    <property type="match status" value="1"/>
</dbReference>
<dbReference type="Gene3D" id="2.30.140.10">
    <property type="entry name" value="Spermidine synthase, tetramerisation domain"/>
    <property type="match status" value="1"/>
</dbReference>
<dbReference type="Gene3D" id="3.40.50.150">
    <property type="entry name" value="Vaccinia Virus protein VP39"/>
    <property type="match status" value="1"/>
</dbReference>
<dbReference type="HAMAP" id="MF_00198">
    <property type="entry name" value="Spermidine_synth"/>
    <property type="match status" value="1"/>
</dbReference>
<dbReference type="InterPro" id="IPR030374">
    <property type="entry name" value="PABS"/>
</dbReference>
<dbReference type="InterPro" id="IPR030373">
    <property type="entry name" value="PABS_CS"/>
</dbReference>
<dbReference type="InterPro" id="IPR029063">
    <property type="entry name" value="SAM-dependent_MTases_sf"/>
</dbReference>
<dbReference type="InterPro" id="IPR001045">
    <property type="entry name" value="Spermi_synthase"/>
</dbReference>
<dbReference type="InterPro" id="IPR035246">
    <property type="entry name" value="Spermidine_synt_N"/>
</dbReference>
<dbReference type="InterPro" id="IPR037163">
    <property type="entry name" value="Spermidine_synt_N_sf"/>
</dbReference>
<dbReference type="NCBIfam" id="NF037959">
    <property type="entry name" value="MFS_SpdSyn"/>
    <property type="match status" value="1"/>
</dbReference>
<dbReference type="NCBIfam" id="NF002010">
    <property type="entry name" value="PRK00811.1"/>
    <property type="match status" value="1"/>
</dbReference>
<dbReference type="NCBIfam" id="TIGR00417">
    <property type="entry name" value="speE"/>
    <property type="match status" value="1"/>
</dbReference>
<dbReference type="PANTHER" id="PTHR11558:SF11">
    <property type="entry name" value="SPERMIDINE SYNTHASE"/>
    <property type="match status" value="1"/>
</dbReference>
<dbReference type="PANTHER" id="PTHR11558">
    <property type="entry name" value="SPERMIDINE/SPERMINE SYNTHASE"/>
    <property type="match status" value="1"/>
</dbReference>
<dbReference type="Pfam" id="PF17284">
    <property type="entry name" value="Spermine_synt_N"/>
    <property type="match status" value="1"/>
</dbReference>
<dbReference type="Pfam" id="PF01564">
    <property type="entry name" value="Spermine_synth"/>
    <property type="match status" value="1"/>
</dbReference>
<dbReference type="SUPFAM" id="SSF53335">
    <property type="entry name" value="S-adenosyl-L-methionine-dependent methyltransferases"/>
    <property type="match status" value="1"/>
</dbReference>
<dbReference type="PROSITE" id="PS01330">
    <property type="entry name" value="PABS_1"/>
    <property type="match status" value="1"/>
</dbReference>
<dbReference type="PROSITE" id="PS51006">
    <property type="entry name" value="PABS_2"/>
    <property type="match status" value="1"/>
</dbReference>
<feature type="chain" id="PRO_0000156470" description="Polyamine aminopropyltransferase">
    <location>
        <begin position="1"/>
        <end position="276"/>
    </location>
</feature>
<feature type="domain" description="PABS" evidence="1">
    <location>
        <begin position="3"/>
        <end position="236"/>
    </location>
</feature>
<feature type="active site" description="Proton acceptor" evidence="1">
    <location>
        <position position="156"/>
    </location>
</feature>
<feature type="binding site" evidence="1">
    <location>
        <position position="32"/>
    </location>
    <ligand>
        <name>S-methyl-5'-thioadenosine</name>
        <dbReference type="ChEBI" id="CHEBI:17509"/>
    </ligand>
</feature>
<feature type="binding site" evidence="1">
    <location>
        <position position="63"/>
    </location>
    <ligand>
        <name>spermidine</name>
        <dbReference type="ChEBI" id="CHEBI:57834"/>
    </ligand>
</feature>
<feature type="binding site" evidence="1">
    <location>
        <position position="87"/>
    </location>
    <ligand>
        <name>spermidine</name>
        <dbReference type="ChEBI" id="CHEBI:57834"/>
    </ligand>
</feature>
<feature type="binding site" evidence="1">
    <location>
        <position position="107"/>
    </location>
    <ligand>
        <name>S-methyl-5'-thioadenosine</name>
        <dbReference type="ChEBI" id="CHEBI:17509"/>
    </ligand>
</feature>
<feature type="binding site" evidence="1">
    <location>
        <begin position="138"/>
        <end position="139"/>
    </location>
    <ligand>
        <name>S-methyl-5'-thioadenosine</name>
        <dbReference type="ChEBI" id="CHEBI:17509"/>
    </ligand>
</feature>
<feature type="binding site" evidence="1">
    <location>
        <begin position="156"/>
        <end position="159"/>
    </location>
    <ligand>
        <name>spermidine</name>
        <dbReference type="ChEBI" id="CHEBI:57834"/>
    </ligand>
</feature>
<feature type="binding site" evidence="1">
    <location>
        <position position="163"/>
    </location>
    <ligand>
        <name>S-methyl-5'-thioadenosine</name>
        <dbReference type="ChEBI" id="CHEBI:17509"/>
    </ligand>
</feature>
<feature type="strand" evidence="4">
    <location>
        <begin position="4"/>
        <end position="11"/>
    </location>
</feature>
<feature type="strand" evidence="4">
    <location>
        <begin position="14"/>
        <end position="28"/>
    </location>
</feature>
<feature type="strand" evidence="4">
    <location>
        <begin position="33"/>
        <end position="39"/>
    </location>
</feature>
<feature type="turn" evidence="4">
    <location>
        <begin position="40"/>
        <end position="42"/>
    </location>
</feature>
<feature type="strand" evidence="4">
    <location>
        <begin position="43"/>
        <end position="48"/>
    </location>
</feature>
<feature type="strand" evidence="4">
    <location>
        <begin position="51"/>
        <end position="55"/>
    </location>
</feature>
<feature type="turn" evidence="4">
    <location>
        <begin position="56"/>
        <end position="59"/>
    </location>
</feature>
<feature type="helix" evidence="4">
    <location>
        <begin position="60"/>
        <end position="73"/>
    </location>
</feature>
<feature type="strand" evidence="4">
    <location>
        <begin position="74"/>
        <end position="76"/>
    </location>
</feature>
<feature type="strand" evidence="4">
    <location>
        <begin position="79"/>
        <end position="84"/>
    </location>
</feature>
<feature type="helix" evidence="4">
    <location>
        <begin position="89"/>
        <end position="94"/>
    </location>
</feature>
<feature type="strand" evidence="4">
    <location>
        <begin position="101"/>
        <end position="108"/>
    </location>
</feature>
<feature type="helix" evidence="4">
    <location>
        <begin position="110"/>
        <end position="119"/>
    </location>
</feature>
<feature type="helix" evidence="4">
    <location>
        <begin position="121"/>
        <end position="124"/>
    </location>
</feature>
<feature type="turn" evidence="4">
    <location>
        <begin position="125"/>
        <end position="128"/>
    </location>
</feature>
<feature type="strand" evidence="4">
    <location>
        <begin position="132"/>
        <end position="137"/>
    </location>
</feature>
<feature type="helix" evidence="4">
    <location>
        <begin position="140"/>
        <end position="144"/>
    </location>
</feature>
<feature type="strand" evidence="4">
    <location>
        <begin position="150"/>
        <end position="156"/>
    </location>
</feature>
<feature type="helix" evidence="4">
    <location>
        <begin position="171"/>
        <end position="179"/>
    </location>
</feature>
<feature type="strand" evidence="4">
    <location>
        <begin position="180"/>
        <end position="189"/>
    </location>
</feature>
<feature type="turn" evidence="4">
    <location>
        <begin position="193"/>
        <end position="195"/>
    </location>
</feature>
<feature type="helix" evidence="4">
    <location>
        <begin position="197"/>
        <end position="208"/>
    </location>
</feature>
<feature type="strand" evidence="4">
    <location>
        <begin position="212"/>
        <end position="219"/>
    </location>
</feature>
<feature type="helix" evidence="4">
    <location>
        <begin position="225"/>
        <end position="227"/>
    </location>
</feature>
<feature type="strand" evidence="4">
    <location>
        <begin position="229"/>
        <end position="237"/>
    </location>
</feature>
<feature type="helix" evidence="4">
    <location>
        <begin position="245"/>
        <end position="247"/>
    </location>
</feature>
<feature type="helix" evidence="4">
    <location>
        <begin position="258"/>
        <end position="263"/>
    </location>
</feature>
<feature type="helix" evidence="4">
    <location>
        <begin position="269"/>
        <end position="272"/>
    </location>
</feature>
<proteinExistence type="evidence at protein level"/>
<name>SPEE_BACSU</name>
<protein>
    <recommendedName>
        <fullName evidence="1">Polyamine aminopropyltransferase</fullName>
    </recommendedName>
    <alternativeName>
        <fullName evidence="1">Putrescine aminopropyltransferase</fullName>
        <shortName evidence="1">PAPT</shortName>
    </alternativeName>
    <alternativeName>
        <fullName evidence="1">Spermidine synthase</fullName>
        <shortName evidence="1">SPDS</shortName>
        <shortName evidence="1">SPDSY</shortName>
        <ecNumber evidence="1">2.5.1.16</ecNumber>
    </alternativeName>
</protein>